<proteinExistence type="evidence at transcript level"/>
<feature type="chain" id="PRO_0000288481" description="Nuclear prelamin A recognition factor">
    <location>
        <begin position="1"/>
        <end position="456"/>
    </location>
</feature>
<feature type="region of interest" description="Disordered" evidence="3">
    <location>
        <begin position="12"/>
        <end position="36"/>
    </location>
</feature>
<feature type="modified residue" description="Phosphoserine" evidence="2">
    <location>
        <position position="29"/>
    </location>
</feature>
<gene>
    <name type="primary">Narf</name>
</gene>
<comment type="subunit">
    <text evidence="1">Interacts with LMNA and binds to the farnesylated C-terminal domain.</text>
</comment>
<comment type="subcellular location">
    <subcellularLocation>
        <location evidence="1">Nucleus</location>
    </subcellularLocation>
</comment>
<comment type="similarity">
    <text evidence="4">Belongs to the NARF family.</text>
</comment>
<protein>
    <recommendedName>
        <fullName>Nuclear prelamin A recognition factor</fullName>
    </recommendedName>
    <alternativeName>
        <fullName>Iron-only hydrogenase-like protein 2</fullName>
        <shortName>IOP2</shortName>
    </alternativeName>
</protein>
<reference key="1">
    <citation type="journal article" date="2004" name="Genome Res.">
        <title>The status, quality, and expansion of the NIH full-length cDNA project: the Mammalian Gene Collection (MGC).</title>
        <authorList>
            <consortium name="The MGC Project Team"/>
        </authorList>
    </citation>
    <scope>NUCLEOTIDE SEQUENCE [LARGE SCALE MRNA]</scope>
    <source>
        <tissue>Testis</tissue>
    </source>
</reference>
<sequence length="456" mass="51466">MKCEHCTRKECSKKSKTDDQENVSVDVPSPAQENEEKGEFHKLADAKIFLSDCLACDSCVTVEEGVQLSQQSAKDFFHVLNLNKRCDTSKHKVLVVSVCPQSLPYFAAKFNLSVTDASRRLCGFLKSLGVHYVFDTTIAADFSILESQKEFVRRYHQHSEEQRELPMLTSACPGWVRYAERVLGRPIIPYLCTAKSPQQVMGSLVKDYFARQQSLAPEKIFHIVVAPCYDKKLEALREGLSPTLNGARGTDCVLTSGEIAQIMEQSDLSVKDIAVDTLFGDVKEMAVRRHDGVSSDGHLAHVFRHAAKELFGEHVEEITYRALRNKDFHEVTLEKNGEVLLRFAAAYGFRNIQNMIMKLKKGKFPYHFVEVLACPRGCLNGRGQAQTEDGHTDRALLQQMEGIYSGIPVWPPESSTHVQELYQEWLEGTESPKVQEVLHTSYQSLEPCTDSLDIKW</sequence>
<organism>
    <name type="scientific">Rattus norvegicus</name>
    <name type="common">Rat</name>
    <dbReference type="NCBI Taxonomy" id="10116"/>
    <lineage>
        <taxon>Eukaryota</taxon>
        <taxon>Metazoa</taxon>
        <taxon>Chordata</taxon>
        <taxon>Craniata</taxon>
        <taxon>Vertebrata</taxon>
        <taxon>Euteleostomi</taxon>
        <taxon>Mammalia</taxon>
        <taxon>Eutheria</taxon>
        <taxon>Euarchontoglires</taxon>
        <taxon>Glires</taxon>
        <taxon>Rodentia</taxon>
        <taxon>Myomorpha</taxon>
        <taxon>Muroidea</taxon>
        <taxon>Muridae</taxon>
        <taxon>Murinae</taxon>
        <taxon>Rattus</taxon>
    </lineage>
</organism>
<accession>Q2YDU6</accession>
<evidence type="ECO:0000250" key="1"/>
<evidence type="ECO:0000250" key="2">
    <source>
        <dbReference type="UniProtKB" id="Q9UHQ1"/>
    </source>
</evidence>
<evidence type="ECO:0000256" key="3">
    <source>
        <dbReference type="SAM" id="MobiDB-lite"/>
    </source>
</evidence>
<evidence type="ECO:0000305" key="4"/>
<keyword id="KW-0539">Nucleus</keyword>
<keyword id="KW-0597">Phosphoprotein</keyword>
<keyword id="KW-1185">Reference proteome</keyword>
<name>NARF_RAT</name>
<dbReference type="EMBL" id="BC110050">
    <property type="protein sequence ID" value="AAI10051.1"/>
    <property type="molecule type" value="mRNA"/>
</dbReference>
<dbReference type="RefSeq" id="NP_001034296.1">
    <property type="nucleotide sequence ID" value="NM_001039207.2"/>
</dbReference>
<dbReference type="SMR" id="Q2YDU6"/>
<dbReference type="FunCoup" id="Q2YDU6">
    <property type="interactions" value="1547"/>
</dbReference>
<dbReference type="STRING" id="10116.ENSRNOP00000051803"/>
<dbReference type="PhosphoSitePlus" id="Q2YDU6"/>
<dbReference type="PaxDb" id="10116-ENSRNOP00000051803"/>
<dbReference type="GeneID" id="360681"/>
<dbReference type="KEGG" id="rno:360681"/>
<dbReference type="AGR" id="RGD:1310894"/>
<dbReference type="CTD" id="26502"/>
<dbReference type="RGD" id="1310894">
    <property type="gene designation" value="Narf"/>
</dbReference>
<dbReference type="VEuPathDB" id="HostDB:ENSRNOG00000036664"/>
<dbReference type="eggNOG" id="KOG2439">
    <property type="taxonomic scope" value="Eukaryota"/>
</dbReference>
<dbReference type="HOGENOM" id="CLU_018240_0_0_1"/>
<dbReference type="InParanoid" id="Q2YDU6"/>
<dbReference type="OrthoDB" id="19428at9989"/>
<dbReference type="PRO" id="PR:Q2YDU6"/>
<dbReference type="Proteomes" id="UP000002494">
    <property type="component" value="Chromosome 10"/>
</dbReference>
<dbReference type="Bgee" id="ENSRNOG00000036664">
    <property type="expression patterns" value="Expressed in quadriceps femoris and 19 other cell types or tissues"/>
</dbReference>
<dbReference type="GO" id="GO:0005638">
    <property type="term" value="C:lamin filament"/>
    <property type="evidence" value="ECO:0000266"/>
    <property type="project" value="RGD"/>
</dbReference>
<dbReference type="GO" id="GO:0031981">
    <property type="term" value="C:nuclear lumen"/>
    <property type="evidence" value="ECO:0000266"/>
    <property type="project" value="RGD"/>
</dbReference>
<dbReference type="GO" id="GO:0005521">
    <property type="term" value="F:lamin binding"/>
    <property type="evidence" value="ECO:0000266"/>
    <property type="project" value="RGD"/>
</dbReference>
<dbReference type="FunFam" id="3.40.50.1780:FF:000019">
    <property type="entry name" value="Cytosolic Fe-S cluster assembly factor NAR1"/>
    <property type="match status" value="1"/>
</dbReference>
<dbReference type="Gene3D" id="3.40.50.1780">
    <property type="match status" value="1"/>
</dbReference>
<dbReference type="Gene3D" id="3.40.950.10">
    <property type="entry name" value="Fe-only Hydrogenase (Larger Subunit), Chain L, domain 3"/>
    <property type="match status" value="1"/>
</dbReference>
<dbReference type="InterPro" id="IPR050340">
    <property type="entry name" value="Cytosolic_Fe-S_CAF"/>
</dbReference>
<dbReference type="InterPro" id="IPR009016">
    <property type="entry name" value="Fe_hydrogenase"/>
</dbReference>
<dbReference type="InterPro" id="IPR004108">
    <property type="entry name" value="Fe_hydrogenase_lsu_C"/>
</dbReference>
<dbReference type="InterPro" id="IPR003149">
    <property type="entry name" value="Fe_hydrogenase_ssu"/>
</dbReference>
<dbReference type="PANTHER" id="PTHR11615">
    <property type="entry name" value="NITRATE, FORMATE, IRON DEHYDROGENASE"/>
    <property type="match status" value="1"/>
</dbReference>
<dbReference type="Pfam" id="PF02906">
    <property type="entry name" value="Fe_hyd_lg_C"/>
    <property type="match status" value="1"/>
</dbReference>
<dbReference type="Pfam" id="PF02256">
    <property type="entry name" value="Fe_hyd_SSU"/>
    <property type="match status" value="1"/>
</dbReference>
<dbReference type="SMART" id="SM00902">
    <property type="entry name" value="Fe_hyd_SSU"/>
    <property type="match status" value="1"/>
</dbReference>
<dbReference type="SUPFAM" id="SSF53920">
    <property type="entry name" value="Fe-only hydrogenase"/>
    <property type="match status" value="1"/>
</dbReference>